<keyword id="KW-0002">3D-structure</keyword>
<keyword id="KW-0963">Cytoplasm</keyword>
<keyword id="KW-0217">Developmental protein</keyword>
<keyword id="KW-0221">Differentiation</keyword>
<keyword id="KW-1015">Disulfide bond</keyword>
<keyword id="KW-0249">Electron transport</keyword>
<keyword id="KW-0256">Endoplasmic reticulum</keyword>
<keyword id="KW-0274">FAD</keyword>
<keyword id="KW-0285">Flavoprotein</keyword>
<keyword id="KW-0488">Methylation</keyword>
<keyword id="KW-0492">Microsome</keyword>
<keyword id="KW-0521">NADP</keyword>
<keyword id="KW-0539">Nucleus</keyword>
<keyword id="KW-0560">Oxidoreductase</keyword>
<keyword id="KW-0597">Phosphoprotein</keyword>
<keyword id="KW-1267">Proteomics identification</keyword>
<keyword id="KW-0676">Redox-active center</keyword>
<keyword id="KW-1185">Reference proteome</keyword>
<keyword id="KW-0712">Selenocysteine</keyword>
<keyword id="KW-0744">Spermatogenesis</keyword>
<keyword id="KW-0813">Transport</keyword>
<proteinExistence type="evidence at protein level"/>
<accession>Q86VQ6</accession>
<accession>Q6F5E7</accession>
<accession>Q6PIS8</accession>
<accession>Q9NNW6</accession>
<accession>Q9P101</accession>
<protein>
    <recommendedName>
        <fullName>Thioredoxin reductase 3</fullName>
        <ecNumber>1.8.1.9</ecNumber>
    </recommendedName>
    <alternativeName>
        <fullName>Thioredoxin and glutathione reductase</fullName>
    </alternativeName>
    <alternativeName>
        <fullName evidence="12">Thioredoxin reductase 3 intronic transcript 1</fullName>
    </alternativeName>
    <alternativeName>
        <fullName evidence="12">Thioredoxin reductase 3 neighbor gene</fullName>
    </alternativeName>
    <alternativeName>
        <fullName>Thioredoxin reductase TR2</fullName>
    </alternativeName>
</protein>
<name>TRXR3_HUMAN</name>
<gene>
    <name evidence="11 12" type="primary">TXNRD3</name>
    <name evidence="4" type="synonym">TGR</name>
    <name evidence="9" type="synonym">TRXR3</name>
    <name evidence="12" type="synonym">TXNRD3IT1</name>
    <name evidence="12" type="synonym">TXNRD3NB</name>
</gene>
<dbReference type="EC" id="1.8.1.9"/>
<dbReference type="EMBL" id="AC024558">
    <property type="status" value="NOT_ANNOTATED_CDS"/>
    <property type="molecule type" value="Genomic_DNA"/>
</dbReference>
<dbReference type="EMBL" id="AB113648">
    <property type="protein sequence ID" value="BAD26752.1"/>
    <property type="status" value="ALT_FRAME"/>
    <property type="molecule type" value="mRNA"/>
</dbReference>
<dbReference type="EMBL" id="BC030028">
    <property type="protein sequence ID" value="AAH30028.1"/>
    <property type="status" value="ALT_SEQ"/>
    <property type="molecule type" value="mRNA"/>
</dbReference>
<dbReference type="EMBL" id="BC050032">
    <property type="protein sequence ID" value="AAH50032.1"/>
    <property type="status" value="ALT_SEQ"/>
    <property type="molecule type" value="mRNA"/>
</dbReference>
<dbReference type="EMBL" id="BC130546">
    <property type="protein sequence ID" value="AAI30547.1"/>
    <property type="status" value="ALT_SEQ"/>
    <property type="molecule type" value="mRNA"/>
</dbReference>
<dbReference type="EMBL" id="BC130548">
    <property type="protein sequence ID" value="AAI30549.1"/>
    <property type="status" value="ALT_SEQ"/>
    <property type="molecule type" value="mRNA"/>
</dbReference>
<dbReference type="EMBL" id="AF171055">
    <property type="protein sequence ID" value="AAD51325.1"/>
    <property type="molecule type" value="mRNA"/>
</dbReference>
<dbReference type="EMBL" id="AF133519">
    <property type="protein sequence ID" value="AAD39929.1"/>
    <property type="molecule type" value="mRNA"/>
</dbReference>
<dbReference type="CCDS" id="CCDS77811.1"/>
<dbReference type="RefSeq" id="NP_001034872.1">
    <property type="nucleotide sequence ID" value="NM_001039783.1"/>
</dbReference>
<dbReference type="RefSeq" id="NP_001166984.1">
    <property type="nucleotide sequence ID" value="NM_001173513.1"/>
</dbReference>
<dbReference type="RefSeq" id="NP_443115.1">
    <property type="nucleotide sequence ID" value="NM_052883.3"/>
</dbReference>
<dbReference type="PDB" id="3H8Q">
    <property type="method" value="X-ray"/>
    <property type="resolution" value="2.21 A"/>
    <property type="chains" value="A/B=51-156"/>
</dbReference>
<dbReference type="PDBsum" id="3H8Q"/>
<dbReference type="SMR" id="Q86VQ6"/>
<dbReference type="BioGRID" id="125281">
    <property type="interactions" value="21"/>
</dbReference>
<dbReference type="BioGRID" id="570785">
    <property type="interactions" value="19"/>
</dbReference>
<dbReference type="FunCoup" id="Q86VQ6">
    <property type="interactions" value="1255"/>
</dbReference>
<dbReference type="IntAct" id="Q86VQ6">
    <property type="interactions" value="10"/>
</dbReference>
<dbReference type="STRING" id="9606.ENSP00000430031"/>
<dbReference type="BindingDB" id="Q86VQ6"/>
<dbReference type="ChEMBL" id="CHEMBL3793"/>
<dbReference type="GlyGen" id="Q86VQ6">
    <property type="glycosylation" value="1 site"/>
</dbReference>
<dbReference type="iPTMnet" id="Q86VQ6"/>
<dbReference type="PhosphoSitePlus" id="Q86VQ6"/>
<dbReference type="BioMuta" id="TXNRD3"/>
<dbReference type="BioMuta" id="TXNRD3NB"/>
<dbReference type="DMDM" id="510120859"/>
<dbReference type="jPOST" id="Q86VQ6"/>
<dbReference type="MassIVE" id="Q86VQ6"/>
<dbReference type="PaxDb" id="9606-ENSP00000373066"/>
<dbReference type="PeptideAtlas" id="Q86VQ6"/>
<dbReference type="ProteomicsDB" id="66289"/>
<dbReference type="ProteomicsDB" id="70059"/>
<dbReference type="Pumba" id="Q86VQ6"/>
<dbReference type="Antibodypedia" id="60139">
    <property type="antibodies" value="151 antibodies from 16 providers"/>
</dbReference>
<dbReference type="DNASU" id="114112"/>
<dbReference type="DNASU" id="645840"/>
<dbReference type="Ensembl" id="ENST00000524230.9">
    <property type="protein sequence ID" value="ENSP00000430031.4"/>
    <property type="gene ID" value="ENSG00000197763.20"/>
</dbReference>
<dbReference type="GeneID" id="114112"/>
<dbReference type="KEGG" id="hsa:114112"/>
<dbReference type="MANE-Select" id="ENST00000524230.9">
    <property type="protein sequence ID" value="ENSP00000430031.4"/>
    <property type="RefSeq nucleotide sequence ID" value="NM_052883.3"/>
    <property type="RefSeq protein sequence ID" value="NP_443115.1"/>
</dbReference>
<dbReference type="AGR" id="HGNC:20667"/>
<dbReference type="CTD" id="114112"/>
<dbReference type="DisGeNET" id="114112"/>
<dbReference type="GeneCards" id="TXNRD3"/>
<dbReference type="HGNC" id="HGNC:20667">
    <property type="gene designation" value="TXNRD3"/>
</dbReference>
<dbReference type="HPA" id="ENSG00000197763">
    <property type="expression patterns" value="Tissue enhanced (testis)"/>
</dbReference>
<dbReference type="MIM" id="606235">
    <property type="type" value="gene"/>
</dbReference>
<dbReference type="neXtProt" id="NX_Q6F5E7"/>
<dbReference type="neXtProt" id="NX_Q86VQ6"/>
<dbReference type="OpenTargets" id="ENSG00000197763"/>
<dbReference type="PharmGKB" id="PA134920642"/>
<dbReference type="VEuPathDB" id="HostDB:ENSG00000197763"/>
<dbReference type="eggNOG" id="ENOG502TED4">
    <property type="taxonomic scope" value="Eukaryota"/>
</dbReference>
<dbReference type="GeneTree" id="ENSGT00940000159178"/>
<dbReference type="HOGENOM" id="CLU_1997862_0_0_1"/>
<dbReference type="InParanoid" id="Q86VQ6"/>
<dbReference type="OMA" id="HPTCGEI"/>
<dbReference type="OrthoDB" id="5956163at2759"/>
<dbReference type="PAN-GO" id="Q86VQ6">
    <property type="GO annotations" value="5 GO annotations based on evolutionary models"/>
</dbReference>
<dbReference type="BRENDA" id="1.8.1.9">
    <property type="organism ID" value="2681"/>
</dbReference>
<dbReference type="PathwayCommons" id="Q86VQ6"/>
<dbReference type="SignaLink" id="Q86VQ6"/>
<dbReference type="BioGRID-ORCS" id="114112">
    <property type="hits" value="14 hits in 404 CRISPR screens"/>
</dbReference>
<dbReference type="BioGRID-ORCS" id="645840">
    <property type="hits" value="12 hits in 1150 CRISPR screens"/>
</dbReference>
<dbReference type="ChiTaRS" id="TXNRD3">
    <property type="organism name" value="human"/>
</dbReference>
<dbReference type="EvolutionaryTrace" id="Q86VQ6"/>
<dbReference type="GenomeRNAi" id="114112"/>
<dbReference type="GenomeRNAi" id="645840"/>
<dbReference type="Pharos" id="Q86VQ6">
    <property type="development level" value="Tbio"/>
</dbReference>
<dbReference type="PRO" id="PR:Q86VQ6"/>
<dbReference type="Proteomes" id="UP000005640">
    <property type="component" value="Chromosome 3"/>
</dbReference>
<dbReference type="RNAct" id="Q86VQ6">
    <property type="molecule type" value="protein"/>
</dbReference>
<dbReference type="Bgee" id="ENSG00000197763">
    <property type="expression patterns" value="Expressed in right testis and 127 other cell types or tissues"/>
</dbReference>
<dbReference type="ExpressionAtlas" id="Q86VQ6">
    <property type="expression patterns" value="baseline and differential"/>
</dbReference>
<dbReference type="GO" id="GO:0005737">
    <property type="term" value="C:cytoplasm"/>
    <property type="evidence" value="ECO:0000318"/>
    <property type="project" value="GO_Central"/>
</dbReference>
<dbReference type="GO" id="GO:0005829">
    <property type="term" value="C:cytosol"/>
    <property type="evidence" value="ECO:0000314"/>
    <property type="project" value="HPA"/>
</dbReference>
<dbReference type="GO" id="GO:0005783">
    <property type="term" value="C:endoplasmic reticulum"/>
    <property type="evidence" value="ECO:0007669"/>
    <property type="project" value="UniProtKB-SubCell"/>
</dbReference>
<dbReference type="GO" id="GO:0005739">
    <property type="term" value="C:mitochondrion"/>
    <property type="evidence" value="ECO:0000318"/>
    <property type="project" value="GO_Central"/>
</dbReference>
<dbReference type="GO" id="GO:0005654">
    <property type="term" value="C:nucleoplasm"/>
    <property type="evidence" value="ECO:0000314"/>
    <property type="project" value="HPA"/>
</dbReference>
<dbReference type="GO" id="GO:0050660">
    <property type="term" value="F:flavin adenine dinucleotide binding"/>
    <property type="evidence" value="ECO:0007669"/>
    <property type="project" value="InterPro"/>
</dbReference>
<dbReference type="GO" id="GO:0004791">
    <property type="term" value="F:thioredoxin-disulfide reductase (NADPH) activity"/>
    <property type="evidence" value="ECO:0000318"/>
    <property type="project" value="GO_Central"/>
</dbReference>
<dbReference type="GO" id="GO:0030154">
    <property type="term" value="P:cell differentiation"/>
    <property type="evidence" value="ECO:0007669"/>
    <property type="project" value="UniProtKB-KW"/>
</dbReference>
<dbReference type="GO" id="GO:0045454">
    <property type="term" value="P:cell redox homeostasis"/>
    <property type="evidence" value="ECO:0000318"/>
    <property type="project" value="GO_Central"/>
</dbReference>
<dbReference type="GO" id="GO:0007283">
    <property type="term" value="P:spermatogenesis"/>
    <property type="evidence" value="ECO:0007669"/>
    <property type="project" value="UniProtKB-KW"/>
</dbReference>
<dbReference type="CDD" id="cd03419">
    <property type="entry name" value="GRX_GRXh_1_2_like"/>
    <property type="match status" value="1"/>
</dbReference>
<dbReference type="FunFam" id="3.50.50.60:FF:000190">
    <property type="entry name" value="Thioredoxin reductase"/>
    <property type="match status" value="1"/>
</dbReference>
<dbReference type="FunFam" id="3.30.390.30:FF:000004">
    <property type="entry name" value="Thioredoxin reductase 1, cytoplasmic"/>
    <property type="match status" value="1"/>
</dbReference>
<dbReference type="FunFam" id="3.40.30.10:FF:000161">
    <property type="entry name" value="Thioredoxin reductase 3"/>
    <property type="match status" value="1"/>
</dbReference>
<dbReference type="Gene3D" id="3.30.390.30">
    <property type="match status" value="1"/>
</dbReference>
<dbReference type="Gene3D" id="3.50.50.60">
    <property type="entry name" value="FAD/NAD(P)-binding domain"/>
    <property type="match status" value="2"/>
</dbReference>
<dbReference type="Gene3D" id="3.40.30.10">
    <property type="entry name" value="Glutaredoxin"/>
    <property type="match status" value="1"/>
</dbReference>
<dbReference type="InterPro" id="IPR036188">
    <property type="entry name" value="FAD/NAD-bd_sf"/>
</dbReference>
<dbReference type="InterPro" id="IPR023753">
    <property type="entry name" value="FAD/NAD-binding_dom"/>
</dbReference>
<dbReference type="InterPro" id="IPR016156">
    <property type="entry name" value="FAD/NAD-linked_Rdtase_dimer_sf"/>
</dbReference>
<dbReference type="InterPro" id="IPR002109">
    <property type="entry name" value="Glutaredoxin"/>
</dbReference>
<dbReference type="InterPro" id="IPR011899">
    <property type="entry name" value="Glutaredoxin_euk/vir"/>
</dbReference>
<dbReference type="InterPro" id="IPR046952">
    <property type="entry name" value="GSHR/TRXR-like"/>
</dbReference>
<dbReference type="InterPro" id="IPR004099">
    <property type="entry name" value="Pyr_nucl-diS_OxRdtase_dimer"/>
</dbReference>
<dbReference type="InterPro" id="IPR012999">
    <property type="entry name" value="Pyr_OxRdtase_I_AS"/>
</dbReference>
<dbReference type="InterPro" id="IPR036249">
    <property type="entry name" value="Thioredoxin-like_sf"/>
</dbReference>
<dbReference type="InterPro" id="IPR006338">
    <property type="entry name" value="Thioredoxin/glutathione_Rdtase"/>
</dbReference>
<dbReference type="NCBIfam" id="TIGR02180">
    <property type="entry name" value="GRX_euk"/>
    <property type="match status" value="1"/>
</dbReference>
<dbReference type="NCBIfam" id="TIGR01438">
    <property type="entry name" value="TGR"/>
    <property type="match status" value="1"/>
</dbReference>
<dbReference type="PANTHER" id="PTHR42737">
    <property type="entry name" value="GLUTATHIONE REDUCTASE"/>
    <property type="match status" value="1"/>
</dbReference>
<dbReference type="PANTHER" id="PTHR42737:SF6">
    <property type="entry name" value="THIOREDOXIN-DISULFIDE REDUCTASE"/>
    <property type="match status" value="1"/>
</dbReference>
<dbReference type="Pfam" id="PF00462">
    <property type="entry name" value="Glutaredoxin"/>
    <property type="match status" value="1"/>
</dbReference>
<dbReference type="Pfam" id="PF07992">
    <property type="entry name" value="Pyr_redox_2"/>
    <property type="match status" value="1"/>
</dbReference>
<dbReference type="Pfam" id="PF02852">
    <property type="entry name" value="Pyr_redox_dim"/>
    <property type="match status" value="1"/>
</dbReference>
<dbReference type="PRINTS" id="PR00368">
    <property type="entry name" value="FADPNR"/>
</dbReference>
<dbReference type="PRINTS" id="PR00411">
    <property type="entry name" value="PNDRDTASEI"/>
</dbReference>
<dbReference type="SUPFAM" id="SSF51905">
    <property type="entry name" value="FAD/NAD(P)-binding domain"/>
    <property type="match status" value="1"/>
</dbReference>
<dbReference type="SUPFAM" id="SSF55424">
    <property type="entry name" value="FAD/NAD-linked reductases, dimerisation (C-terminal) domain"/>
    <property type="match status" value="1"/>
</dbReference>
<dbReference type="SUPFAM" id="SSF52833">
    <property type="entry name" value="Thioredoxin-like"/>
    <property type="match status" value="1"/>
</dbReference>
<dbReference type="PROSITE" id="PS51354">
    <property type="entry name" value="GLUTAREDOXIN_2"/>
    <property type="match status" value="1"/>
</dbReference>
<dbReference type="PROSITE" id="PS00076">
    <property type="entry name" value="PYRIDINE_REDOX_1"/>
    <property type="match status" value="1"/>
</dbReference>
<organism>
    <name type="scientific">Homo sapiens</name>
    <name type="common">Human</name>
    <dbReference type="NCBI Taxonomy" id="9606"/>
    <lineage>
        <taxon>Eukaryota</taxon>
        <taxon>Metazoa</taxon>
        <taxon>Chordata</taxon>
        <taxon>Craniata</taxon>
        <taxon>Vertebrata</taxon>
        <taxon>Euteleostomi</taxon>
        <taxon>Mammalia</taxon>
        <taxon>Eutheria</taxon>
        <taxon>Euarchontoglires</taxon>
        <taxon>Primates</taxon>
        <taxon>Haplorrhini</taxon>
        <taxon>Catarrhini</taxon>
        <taxon>Hominidae</taxon>
        <taxon>Homo</taxon>
    </lineage>
</organism>
<sequence length="643" mass="70683">MERSPPQSPGPGKAGDAPNRRSGHVRGARVLSPPGRRARLSSPGPSRSSEAREELRRHLVGLIERSRVVIFSKSYCPHSTRVKELFSSLGVECNVLELDQVDDGARVQEVLSEITNQKTVPNIFVNKVHVGGCDQTFQAYQSGLLQKLLQEDLAYDYDLIIIGGGSGGLSCAKEAAILGKKVMVLDFVVPSPQGTSWGLGGTCVNVGCIPKKLMHQAALLGQALCDSRKFGWEYNQQVRHNWETMTKAIQNHISSLNWGYRLSLREKAVAYVNSYGEFVEHHKIKATNKKGQETYYTAAQFVIATGERPRYLGIQGDKEYCITSDDLFSLPYCPGKTLVVGASYVALECAGFLAGFGLDVTVMVRSILLRGFDQEMAEKVGSYMEQHGVKFLRKFIPVMVQQLEKGSPGKLKVLAKSTEGTETIEGVYNTVLLAIGRDSCTRKIGLEKIGVKINEKSGKIPVNDVEQTNVPYVYAVGDILEDKPELTPVAIQSGKLLAQRLFGASLEKCDYINVPTTVFTPLEYGCCGLSEEKAIEVYKKENLEIYHTLFWPLEWTVAGRENNTCYAKIICNKFDHDRVIGFHILGPNAGEVTQGFAAAMKCGLTKQLLDDTIGIHPTCGEVFTTLEITKSSGLDITQKGCUG</sequence>
<reference evidence="7" key="1">
    <citation type="journal article" date="2006" name="Nature">
        <title>The DNA sequence, annotation and analysis of human chromosome 3.</title>
        <authorList>
            <person name="Muzny D.M."/>
            <person name="Scherer S.E."/>
            <person name="Kaul R."/>
            <person name="Wang J."/>
            <person name="Yu J."/>
            <person name="Sudbrak R."/>
            <person name="Buhay C.J."/>
            <person name="Chen R."/>
            <person name="Cree A."/>
            <person name="Ding Y."/>
            <person name="Dugan-Rocha S."/>
            <person name="Gill R."/>
            <person name="Gunaratne P."/>
            <person name="Harris R.A."/>
            <person name="Hawes A.C."/>
            <person name="Hernandez J."/>
            <person name="Hodgson A.V."/>
            <person name="Hume J."/>
            <person name="Jackson A."/>
            <person name="Khan Z.M."/>
            <person name="Kovar-Smith C."/>
            <person name="Lewis L.R."/>
            <person name="Lozado R.J."/>
            <person name="Metzker M.L."/>
            <person name="Milosavljevic A."/>
            <person name="Miner G.R."/>
            <person name="Morgan M.B."/>
            <person name="Nazareth L.V."/>
            <person name="Scott G."/>
            <person name="Sodergren E."/>
            <person name="Song X.-Z."/>
            <person name="Steffen D."/>
            <person name="Wei S."/>
            <person name="Wheeler D.A."/>
            <person name="Wright M.W."/>
            <person name="Worley K.C."/>
            <person name="Yuan Y."/>
            <person name="Zhang Z."/>
            <person name="Adams C.Q."/>
            <person name="Ansari-Lari M.A."/>
            <person name="Ayele M."/>
            <person name="Brown M.J."/>
            <person name="Chen G."/>
            <person name="Chen Z."/>
            <person name="Clendenning J."/>
            <person name="Clerc-Blankenburg K.P."/>
            <person name="Chen R."/>
            <person name="Chen Z."/>
            <person name="Davis C."/>
            <person name="Delgado O."/>
            <person name="Dinh H.H."/>
            <person name="Dong W."/>
            <person name="Draper H."/>
            <person name="Ernst S."/>
            <person name="Fu G."/>
            <person name="Gonzalez-Garay M.L."/>
            <person name="Garcia D.K."/>
            <person name="Gillett W."/>
            <person name="Gu J."/>
            <person name="Hao B."/>
            <person name="Haugen E."/>
            <person name="Havlak P."/>
            <person name="He X."/>
            <person name="Hennig S."/>
            <person name="Hu S."/>
            <person name="Huang W."/>
            <person name="Jackson L.R."/>
            <person name="Jacob L.S."/>
            <person name="Kelly S.H."/>
            <person name="Kube M."/>
            <person name="Levy R."/>
            <person name="Li Z."/>
            <person name="Liu B."/>
            <person name="Liu J."/>
            <person name="Liu W."/>
            <person name="Lu J."/>
            <person name="Maheshwari M."/>
            <person name="Nguyen B.-V."/>
            <person name="Okwuonu G.O."/>
            <person name="Palmeiri A."/>
            <person name="Pasternak S."/>
            <person name="Perez L.M."/>
            <person name="Phelps K.A."/>
            <person name="Plopper F.J."/>
            <person name="Qiang B."/>
            <person name="Raymond C."/>
            <person name="Rodriguez R."/>
            <person name="Saenphimmachak C."/>
            <person name="Santibanez J."/>
            <person name="Shen H."/>
            <person name="Shen Y."/>
            <person name="Subramanian S."/>
            <person name="Tabor P.E."/>
            <person name="Verduzco D."/>
            <person name="Waldron L."/>
            <person name="Wang J."/>
            <person name="Wang J."/>
            <person name="Wang Q."/>
            <person name="Williams G.A."/>
            <person name="Wong G.K.-S."/>
            <person name="Yao Z."/>
            <person name="Zhang J."/>
            <person name="Zhang X."/>
            <person name="Zhao G."/>
            <person name="Zhou J."/>
            <person name="Zhou Y."/>
            <person name="Nelson D."/>
            <person name="Lehrach H."/>
            <person name="Reinhardt R."/>
            <person name="Naylor S.L."/>
            <person name="Yang H."/>
            <person name="Olson M."/>
            <person name="Weinstock G."/>
            <person name="Gibbs R.A."/>
        </authorList>
    </citation>
    <scope>NUCLEOTIDE SEQUENCE [LARGE SCALE GENOMIC DNA]</scope>
</reference>
<reference evidence="7 11" key="2">
    <citation type="journal article" date="2004" name="Genome Res.">
        <title>The status, quality, and expansion of the NIH full-length cDNA project: the Mammalian Gene Collection (MGC).</title>
        <authorList>
            <consortium name="The MGC Project Team"/>
        </authorList>
    </citation>
    <scope>NUCLEOTIDE SEQUENCE [LARGE SCALE MRNA]</scope>
    <source>
        <tissue>Brain</tissue>
        <tissue evidence="11">Testis</tissue>
    </source>
</reference>
<reference evidence="7 10" key="3">
    <citation type="journal article" date="1999" name="J. Biol. Chem.">
        <title>Redox regulation of cell signaling by selenocysteine in mammalian thioredoxin reductases.</title>
        <authorList>
            <person name="Sun Q.-A."/>
            <person name="Wu Y."/>
            <person name="Zappacosta F."/>
            <person name="Jeang K.-T."/>
            <person name="Lee B.J."/>
            <person name="Hatfield D.L."/>
            <person name="Gladyshev V.N."/>
        </authorList>
    </citation>
    <scope>NUCLEOTIDE SEQUENCE [MRNA] OF 65-643</scope>
    <scope>SELENOCYSTEINE AT SEC-642</scope>
</reference>
<reference evidence="7 9" key="4">
    <citation type="submission" date="1999-03" db="EMBL/GenBank/DDBJ databases">
        <title>TrxR3, a novel human thioredoxin reductase.</title>
        <authorList>
            <person name="Miranda-Vizuete A."/>
        </authorList>
    </citation>
    <scope>NUCLEOTIDE SEQUENCE [MRNA] OF 67-643</scope>
</reference>
<reference key="5">
    <citation type="journal article" date="2005" name="Mamm. Genome">
        <title>Identification and characterization of novel variants of the thioredoxin reductase 3 new transcript 1 TXNRD3NT1.</title>
        <authorList>
            <person name="Matsuzaka Y."/>
            <person name="Okamoto K."/>
            <person name="Mabuchi T."/>
            <person name="Iizuka M."/>
            <person name="Ozawa A."/>
            <person name="Oka A."/>
            <person name="Tamiya G."/>
            <person name="Kulski J.K."/>
            <person name="Inoko H."/>
        </authorList>
    </citation>
    <scope>NUCLEOTIDE SEQUENCE [MRNA] OF 603-643</scope>
</reference>
<reference key="6">
    <citation type="journal article" date="2008" name="Proc. Natl. Acad. Sci. U.S.A.">
        <title>A quantitative atlas of mitotic phosphorylation.</title>
        <authorList>
            <person name="Dephoure N."/>
            <person name="Zhou C."/>
            <person name="Villen J."/>
            <person name="Beausoleil S.A."/>
            <person name="Bakalarski C.E."/>
            <person name="Elledge S.J."/>
            <person name="Gygi S.P."/>
        </authorList>
    </citation>
    <scope>PHOSPHORYLATION [LARGE SCALE ANALYSIS] AT SER-41 AND SER-42</scope>
    <scope>IDENTIFICATION BY MASS SPECTROMETRY [LARGE SCALE ANALYSIS]</scope>
    <source>
        <tissue>Cervix carcinoma</tissue>
    </source>
</reference>
<reference key="7">
    <citation type="journal article" date="2010" name="J. Biol. Chem.">
        <title>CUG start codon generates thioredoxin/glutathione reductase isoforms in mouse testes.</title>
        <authorList>
            <person name="Gerashchenko M.V."/>
            <person name="Su D."/>
            <person name="Gladyshev V.N."/>
        </authorList>
    </citation>
    <scope>PROBABLE NON-AUG INITIATOR START CODON</scope>
</reference>
<comment type="function">
    <text evidence="4">Displays thioredoxin reductase, glutaredoxin and glutathione reductase activities. Catalyzes disulfide bond isomerization. Promotes disulfide bond formation between GPX4 and various sperm proteins and may play a role in sperm maturation by promoting formation of sperm structural components (By similarity).</text>
</comment>
<comment type="catalytic activity">
    <reaction evidence="4">
        <text>[thioredoxin]-dithiol + NADP(+) = [thioredoxin]-disulfide + NADPH + H(+)</text>
        <dbReference type="Rhea" id="RHEA:20345"/>
        <dbReference type="Rhea" id="RHEA-COMP:10698"/>
        <dbReference type="Rhea" id="RHEA-COMP:10700"/>
        <dbReference type="ChEBI" id="CHEBI:15378"/>
        <dbReference type="ChEBI" id="CHEBI:29950"/>
        <dbReference type="ChEBI" id="CHEBI:50058"/>
        <dbReference type="ChEBI" id="CHEBI:57783"/>
        <dbReference type="ChEBI" id="CHEBI:58349"/>
        <dbReference type="EC" id="1.8.1.9"/>
    </reaction>
</comment>
<comment type="cofactor">
    <cofactor evidence="2">
        <name>FAD</name>
        <dbReference type="ChEBI" id="CHEBI:57692"/>
    </cofactor>
    <text evidence="2">Binds 1 FAD per subunit.</text>
</comment>
<comment type="subunit">
    <text evidence="2">Homodimer.</text>
</comment>
<comment type="subcellular location">
    <subcellularLocation>
        <location evidence="4">Cytoplasm</location>
    </subcellularLocation>
    <subcellularLocation>
        <location evidence="4">Nucleus</location>
    </subcellularLocation>
    <subcellularLocation>
        <location evidence="4">Microsome</location>
    </subcellularLocation>
    <subcellularLocation>
        <location evidence="1">Endoplasmic reticulum</location>
    </subcellularLocation>
    <text evidence="4">Detected in cytoplasm and nucleus in late spermatids.</text>
</comment>
<comment type="domain">
    <text evidence="4">The N-terminal glutaredoxin domain does not contain the C-X-X-C redox-active motif normally found in glutaredoxins but activity may be mediated through a single cysteine. The C-terminal Cys-Sec motif of one subunit of the homodimer may transfer electrons from the thiol-disulfide center to the glutaredoxin domain of the other subunit (By similarity).</text>
</comment>
<comment type="miscellaneous">
    <text evidence="3">The thioredoxin reductase active site is a redox-active disulfide bond. The selenocysteine residue is also essential for catalytic activity (By similarity).</text>
</comment>
<comment type="similarity">
    <text evidence="7">Belongs to the class-I pyridine nucleotide-disulfide oxidoreductase family.</text>
</comment>
<comment type="caution">
    <text evidence="8">This sequence initiates at a CTG codon.</text>
</comment>
<comment type="sequence caution" evidence="7">
    <conflict type="erroneous termination">
        <sequence resource="EMBL-CDS" id="AAH30028"/>
    </conflict>
    <text>Truncated C-terminus.</text>
</comment>
<comment type="sequence caution" evidence="7">
    <conflict type="miscellaneous discrepancy">
        <sequence resource="EMBL-CDS" id="AAH30028"/>
    </conflict>
    <text>Unusual initiator. The initiator methionine is coded by a non-canonical CTG leucine codon.</text>
</comment>
<comment type="sequence caution" evidence="7">
    <conflict type="erroneous termination">
        <sequence resource="EMBL-CDS" id="AAH50032"/>
    </conflict>
    <text>Truncated C-terminus.</text>
</comment>
<comment type="sequence caution" evidence="7">
    <conflict type="miscellaneous discrepancy">
        <sequence resource="EMBL-CDS" id="AAH50032"/>
    </conflict>
    <text>Unusual initiator. The initiator methionine is coded by a non-canonical CTG leucine codon.</text>
</comment>
<comment type="sequence caution" evidence="7">
    <conflict type="miscellaneous discrepancy">
        <sequence resource="EMBL-CDS" id="AAI30547"/>
    </conflict>
    <text>Partial mRNA aligning with the 3' UTR of the gene.</text>
</comment>
<comment type="sequence caution" evidence="7">
    <conflict type="miscellaneous discrepancy">
        <sequence resource="EMBL-CDS" id="AAI30549"/>
    </conflict>
    <text>Partial mRNA aligning with the 3' UTR of the gene.</text>
</comment>
<comment type="sequence caution" evidence="7">
    <conflict type="erroneous translation">
        <sequence resource="EMBL-CDS" id="BAD26752"/>
    </conflict>
    <text>Wrong choice of frame.</text>
</comment>
<feature type="chain" id="PRO_0000320695" description="Thioredoxin reductase 3">
    <location>
        <begin position="1"/>
        <end position="643"/>
    </location>
</feature>
<feature type="domain" description="Glutaredoxin" evidence="5">
    <location>
        <begin position="56"/>
        <end position="156"/>
    </location>
</feature>
<feature type="region of interest" description="Disordered" evidence="6">
    <location>
        <begin position="1"/>
        <end position="53"/>
    </location>
</feature>
<feature type="active site" description="Proton acceptor" evidence="1">
    <location>
        <position position="616"/>
    </location>
</feature>
<feature type="binding site" evidence="1">
    <location>
        <begin position="158"/>
        <end position="187"/>
    </location>
    <ligand>
        <name>FAD</name>
        <dbReference type="ChEBI" id="CHEBI:57692"/>
    </ligand>
</feature>
<feature type="non-standard amino acid" description="Selenocysteine">
    <location>
        <position position="642"/>
    </location>
</feature>
<feature type="modified residue" description="Asymmetric dimethylarginine; alternate" evidence="4">
    <location>
        <position position="26"/>
    </location>
</feature>
<feature type="modified residue" description="Omega-N-methylarginine; alternate" evidence="4">
    <location>
        <position position="26"/>
    </location>
</feature>
<feature type="modified residue" description="Phosphoserine" evidence="13">
    <location>
        <position position="41"/>
    </location>
</feature>
<feature type="modified residue" description="Phosphoserine" evidence="13">
    <location>
        <position position="42"/>
    </location>
</feature>
<feature type="modified residue" description="N6-succinyllysine" evidence="4">
    <location>
        <position position="379"/>
    </location>
</feature>
<feature type="disulfide bond" description="Redox-active" evidence="1">
    <location>
        <begin position="203"/>
        <end position="208"/>
    </location>
</feature>
<feature type="cross-link" description="Cysteinyl-selenocysteine (Cys-Sec)" evidence="1">
    <location>
        <begin position="641"/>
        <end position="642"/>
    </location>
</feature>
<feature type="sequence conflict" description="In Ref. 3; AAD51325." evidence="7" ref="3">
    <original>RS</original>
    <variation>AE</variation>
    <location>
        <begin position="65"/>
        <end position="66"/>
    </location>
</feature>
<feature type="sequence conflict" description="In Ref. 2; AAH30028." evidence="7" ref="2">
    <original>T</original>
    <variation>I</variation>
    <location>
        <position position="246"/>
    </location>
</feature>
<feature type="sequence conflict" description="In Ref. 4; AAD39929." evidence="7" ref="4">
    <original>T</original>
    <variation>P</variation>
    <location>
        <position position="337"/>
    </location>
</feature>
<feature type="helix" evidence="14">
    <location>
        <begin position="53"/>
        <end position="65"/>
    </location>
</feature>
<feature type="strand" evidence="14">
    <location>
        <begin position="67"/>
        <end position="72"/>
    </location>
</feature>
<feature type="helix" evidence="14">
    <location>
        <begin position="77"/>
        <end position="88"/>
    </location>
</feature>
<feature type="strand" evidence="14">
    <location>
        <begin position="94"/>
        <end position="97"/>
    </location>
</feature>
<feature type="turn" evidence="14">
    <location>
        <begin position="98"/>
        <end position="100"/>
    </location>
</feature>
<feature type="helix" evidence="14">
    <location>
        <begin position="104"/>
        <end position="115"/>
    </location>
</feature>
<feature type="strand" evidence="14">
    <location>
        <begin position="122"/>
        <end position="125"/>
    </location>
</feature>
<feature type="strand" evidence="14">
    <location>
        <begin position="128"/>
        <end position="132"/>
    </location>
</feature>
<feature type="helix" evidence="14">
    <location>
        <begin position="133"/>
        <end position="142"/>
    </location>
</feature>
<feature type="helix" evidence="14">
    <location>
        <begin position="144"/>
        <end position="150"/>
    </location>
</feature>
<evidence type="ECO:0000250" key="1"/>
<evidence type="ECO:0000250" key="2">
    <source>
        <dbReference type="UniProtKB" id="O89049"/>
    </source>
</evidence>
<evidence type="ECO:0000250" key="3">
    <source>
        <dbReference type="UniProtKB" id="Q16881"/>
    </source>
</evidence>
<evidence type="ECO:0000250" key="4">
    <source>
        <dbReference type="UniProtKB" id="Q99MD6"/>
    </source>
</evidence>
<evidence type="ECO:0000255" key="5">
    <source>
        <dbReference type="PROSITE-ProRule" id="PRU00686"/>
    </source>
</evidence>
<evidence type="ECO:0000256" key="6">
    <source>
        <dbReference type="SAM" id="MobiDB-lite"/>
    </source>
</evidence>
<evidence type="ECO:0000305" key="7"/>
<evidence type="ECO:0000305" key="8">
    <source>
    </source>
</evidence>
<evidence type="ECO:0000312" key="9">
    <source>
        <dbReference type="EMBL" id="AAD39929.1"/>
    </source>
</evidence>
<evidence type="ECO:0000312" key="10">
    <source>
        <dbReference type="EMBL" id="AAD51325.1"/>
    </source>
</evidence>
<evidence type="ECO:0000312" key="11">
    <source>
        <dbReference type="EMBL" id="AAH50032.1"/>
    </source>
</evidence>
<evidence type="ECO:0000312" key="12">
    <source>
        <dbReference type="HGNC" id="HGNC:20667"/>
    </source>
</evidence>
<evidence type="ECO:0007744" key="13">
    <source>
    </source>
</evidence>
<evidence type="ECO:0007829" key="14">
    <source>
        <dbReference type="PDB" id="3H8Q"/>
    </source>
</evidence>